<protein>
    <recommendedName>
        <fullName evidence="1">CTP synthase</fullName>
        <ecNumber evidence="1">6.3.4.2</ecNumber>
    </recommendedName>
    <alternativeName>
        <fullName evidence="1">Cytidine 5'-triphosphate synthase</fullName>
    </alternativeName>
    <alternativeName>
        <fullName evidence="1">Cytidine triphosphate synthetase</fullName>
        <shortName evidence="1">CTP synthetase</shortName>
        <shortName evidence="1">CTPS</shortName>
    </alternativeName>
    <alternativeName>
        <fullName evidence="1">UTP--ammonia ligase</fullName>
    </alternativeName>
</protein>
<organism>
    <name type="scientific">Salmonella paratyphi A (strain ATCC 9150 / SARB42)</name>
    <dbReference type="NCBI Taxonomy" id="295319"/>
    <lineage>
        <taxon>Bacteria</taxon>
        <taxon>Pseudomonadati</taxon>
        <taxon>Pseudomonadota</taxon>
        <taxon>Gammaproteobacteria</taxon>
        <taxon>Enterobacterales</taxon>
        <taxon>Enterobacteriaceae</taxon>
        <taxon>Salmonella</taxon>
    </lineage>
</organism>
<sequence length="545" mass="60132">MTTNYIFVTGGVVSSLGKGIAAASLAAILEARGLNVTIMKLDPYINVDPGTMSPIQHGEVFVTEDGAETDLDLGHYERFIRTKMSRRNNFTTGRIYSDVLRKERRGDYLGATVQVIPHITNAIKERVLEGGEGHDVVLVEIGGTVGDIESLPFLEAIRQLAVDIGREHALFMHLTLVPYLAAAGEVKTKPTQHSVKELLSIGIQPDILICRSDRAVPANERAKIALFCNVPEKAVISMKDVDSIYKIPGLLKSQGLDDYICKRFSLNCPEANLSEWEQVIYEEANPAGEVTIGMVGKYIELPDAYKSVIEALKHGGLKNRVTVNIKLIDSQDVETRGVEILKDLDAILIPGGFGYRGVEGKIATARYARENNIPYLGICLGMQVALIEFARNVAGMDNANSTEFVPDCKYPVVALITEWRDEDGNVEVRSEKSDLGGTMRLGAQQCQLSDDSLVRQLYGAPTIVERHRHRYEVNNMLLKQIEAAGLRVAGRSGDDQLVEIIEVPNHPWFVACQFHPEFTSTPRDGHPLFAGFVKAANEHQKRQAK</sequence>
<reference key="1">
    <citation type="journal article" date="2004" name="Nat. Genet.">
        <title>Comparison of genome degradation in Paratyphi A and Typhi, human-restricted serovars of Salmonella enterica that cause typhoid.</title>
        <authorList>
            <person name="McClelland M."/>
            <person name="Sanderson K.E."/>
            <person name="Clifton S.W."/>
            <person name="Latreille P."/>
            <person name="Porwollik S."/>
            <person name="Sabo A."/>
            <person name="Meyer R."/>
            <person name="Bieri T."/>
            <person name="Ozersky P."/>
            <person name="McLellan M."/>
            <person name="Harkins C.R."/>
            <person name="Wang C."/>
            <person name="Nguyen C."/>
            <person name="Berghoff A."/>
            <person name="Elliott G."/>
            <person name="Kohlberg S."/>
            <person name="Strong C."/>
            <person name="Du F."/>
            <person name="Carter J."/>
            <person name="Kremizki C."/>
            <person name="Layman D."/>
            <person name="Leonard S."/>
            <person name="Sun H."/>
            <person name="Fulton L."/>
            <person name="Nash W."/>
            <person name="Miner T."/>
            <person name="Minx P."/>
            <person name="Delehaunty K."/>
            <person name="Fronick C."/>
            <person name="Magrini V."/>
            <person name="Nhan M."/>
            <person name="Warren W."/>
            <person name="Florea L."/>
            <person name="Spieth J."/>
            <person name="Wilson R.K."/>
        </authorList>
    </citation>
    <scope>NUCLEOTIDE SEQUENCE [LARGE SCALE GENOMIC DNA]</scope>
    <source>
        <strain>ATCC 9150 / SARB42</strain>
    </source>
</reference>
<dbReference type="EC" id="6.3.4.2" evidence="1"/>
<dbReference type="EMBL" id="CP000026">
    <property type="protein sequence ID" value="AAV78660.1"/>
    <property type="molecule type" value="Genomic_DNA"/>
</dbReference>
<dbReference type="RefSeq" id="WP_000210861.1">
    <property type="nucleotide sequence ID" value="NC_006511.1"/>
</dbReference>
<dbReference type="SMR" id="Q5PEJ0"/>
<dbReference type="KEGG" id="spt:SPA2810"/>
<dbReference type="HOGENOM" id="CLU_011675_5_0_6"/>
<dbReference type="UniPathway" id="UPA00159">
    <property type="reaction ID" value="UER00277"/>
</dbReference>
<dbReference type="Proteomes" id="UP000008185">
    <property type="component" value="Chromosome"/>
</dbReference>
<dbReference type="GO" id="GO:0005829">
    <property type="term" value="C:cytosol"/>
    <property type="evidence" value="ECO:0007669"/>
    <property type="project" value="TreeGrafter"/>
</dbReference>
<dbReference type="GO" id="GO:0005524">
    <property type="term" value="F:ATP binding"/>
    <property type="evidence" value="ECO:0007669"/>
    <property type="project" value="UniProtKB-KW"/>
</dbReference>
<dbReference type="GO" id="GO:0003883">
    <property type="term" value="F:CTP synthase activity"/>
    <property type="evidence" value="ECO:0007669"/>
    <property type="project" value="UniProtKB-UniRule"/>
</dbReference>
<dbReference type="GO" id="GO:0004359">
    <property type="term" value="F:glutaminase activity"/>
    <property type="evidence" value="ECO:0007669"/>
    <property type="project" value="RHEA"/>
</dbReference>
<dbReference type="GO" id="GO:0042802">
    <property type="term" value="F:identical protein binding"/>
    <property type="evidence" value="ECO:0007669"/>
    <property type="project" value="TreeGrafter"/>
</dbReference>
<dbReference type="GO" id="GO:0046872">
    <property type="term" value="F:metal ion binding"/>
    <property type="evidence" value="ECO:0007669"/>
    <property type="project" value="UniProtKB-KW"/>
</dbReference>
<dbReference type="GO" id="GO:0044210">
    <property type="term" value="P:'de novo' CTP biosynthetic process"/>
    <property type="evidence" value="ECO:0007669"/>
    <property type="project" value="UniProtKB-UniRule"/>
</dbReference>
<dbReference type="GO" id="GO:0019856">
    <property type="term" value="P:pyrimidine nucleobase biosynthetic process"/>
    <property type="evidence" value="ECO:0007669"/>
    <property type="project" value="TreeGrafter"/>
</dbReference>
<dbReference type="CDD" id="cd03113">
    <property type="entry name" value="CTPS_N"/>
    <property type="match status" value="1"/>
</dbReference>
<dbReference type="CDD" id="cd01746">
    <property type="entry name" value="GATase1_CTP_Synthase"/>
    <property type="match status" value="1"/>
</dbReference>
<dbReference type="FunFam" id="3.40.50.300:FF:000009">
    <property type="entry name" value="CTP synthase"/>
    <property type="match status" value="1"/>
</dbReference>
<dbReference type="FunFam" id="3.40.50.880:FF:000002">
    <property type="entry name" value="CTP synthase"/>
    <property type="match status" value="1"/>
</dbReference>
<dbReference type="Gene3D" id="3.40.50.880">
    <property type="match status" value="1"/>
</dbReference>
<dbReference type="Gene3D" id="3.40.50.300">
    <property type="entry name" value="P-loop containing nucleotide triphosphate hydrolases"/>
    <property type="match status" value="1"/>
</dbReference>
<dbReference type="HAMAP" id="MF_01227">
    <property type="entry name" value="PyrG"/>
    <property type="match status" value="1"/>
</dbReference>
<dbReference type="InterPro" id="IPR029062">
    <property type="entry name" value="Class_I_gatase-like"/>
</dbReference>
<dbReference type="InterPro" id="IPR004468">
    <property type="entry name" value="CTP_synthase"/>
</dbReference>
<dbReference type="InterPro" id="IPR017456">
    <property type="entry name" value="CTP_synthase_N"/>
</dbReference>
<dbReference type="InterPro" id="IPR017926">
    <property type="entry name" value="GATASE"/>
</dbReference>
<dbReference type="InterPro" id="IPR033828">
    <property type="entry name" value="GATase1_CTP_Synthase"/>
</dbReference>
<dbReference type="InterPro" id="IPR027417">
    <property type="entry name" value="P-loop_NTPase"/>
</dbReference>
<dbReference type="NCBIfam" id="NF003792">
    <property type="entry name" value="PRK05380.1"/>
    <property type="match status" value="1"/>
</dbReference>
<dbReference type="NCBIfam" id="TIGR00337">
    <property type="entry name" value="PyrG"/>
    <property type="match status" value="1"/>
</dbReference>
<dbReference type="PANTHER" id="PTHR11550">
    <property type="entry name" value="CTP SYNTHASE"/>
    <property type="match status" value="1"/>
</dbReference>
<dbReference type="PANTHER" id="PTHR11550:SF0">
    <property type="entry name" value="CTP SYNTHASE-RELATED"/>
    <property type="match status" value="1"/>
</dbReference>
<dbReference type="Pfam" id="PF06418">
    <property type="entry name" value="CTP_synth_N"/>
    <property type="match status" value="1"/>
</dbReference>
<dbReference type="Pfam" id="PF00117">
    <property type="entry name" value="GATase"/>
    <property type="match status" value="1"/>
</dbReference>
<dbReference type="SUPFAM" id="SSF52317">
    <property type="entry name" value="Class I glutamine amidotransferase-like"/>
    <property type="match status" value="1"/>
</dbReference>
<dbReference type="SUPFAM" id="SSF52540">
    <property type="entry name" value="P-loop containing nucleoside triphosphate hydrolases"/>
    <property type="match status" value="1"/>
</dbReference>
<dbReference type="PROSITE" id="PS51273">
    <property type="entry name" value="GATASE_TYPE_1"/>
    <property type="match status" value="1"/>
</dbReference>
<name>PYRG_SALPA</name>
<feature type="chain" id="PRO_0000266211" description="CTP synthase">
    <location>
        <begin position="1"/>
        <end position="545"/>
    </location>
</feature>
<feature type="domain" description="Glutamine amidotransferase type-1" evidence="1">
    <location>
        <begin position="291"/>
        <end position="542"/>
    </location>
</feature>
<feature type="region of interest" description="Amidoligase domain" evidence="1">
    <location>
        <begin position="1"/>
        <end position="266"/>
    </location>
</feature>
<feature type="active site" description="Nucleophile; for glutamine hydrolysis" evidence="1">
    <location>
        <position position="379"/>
    </location>
</feature>
<feature type="active site" evidence="1">
    <location>
        <position position="515"/>
    </location>
</feature>
<feature type="active site" evidence="1">
    <location>
        <position position="517"/>
    </location>
</feature>
<feature type="binding site" evidence="1">
    <location>
        <position position="14"/>
    </location>
    <ligand>
        <name>CTP</name>
        <dbReference type="ChEBI" id="CHEBI:37563"/>
        <note>allosteric inhibitor</note>
    </ligand>
</feature>
<feature type="binding site" evidence="1">
    <location>
        <position position="14"/>
    </location>
    <ligand>
        <name>UTP</name>
        <dbReference type="ChEBI" id="CHEBI:46398"/>
    </ligand>
</feature>
<feature type="binding site" evidence="1">
    <location>
        <begin position="15"/>
        <end position="20"/>
    </location>
    <ligand>
        <name>ATP</name>
        <dbReference type="ChEBI" id="CHEBI:30616"/>
    </ligand>
</feature>
<feature type="binding site" evidence="1">
    <location>
        <position position="72"/>
    </location>
    <ligand>
        <name>ATP</name>
        <dbReference type="ChEBI" id="CHEBI:30616"/>
    </ligand>
</feature>
<feature type="binding site" evidence="1">
    <location>
        <position position="72"/>
    </location>
    <ligand>
        <name>Mg(2+)</name>
        <dbReference type="ChEBI" id="CHEBI:18420"/>
    </ligand>
</feature>
<feature type="binding site" evidence="1">
    <location>
        <position position="140"/>
    </location>
    <ligand>
        <name>Mg(2+)</name>
        <dbReference type="ChEBI" id="CHEBI:18420"/>
    </ligand>
</feature>
<feature type="binding site" evidence="1">
    <location>
        <begin position="147"/>
        <end position="149"/>
    </location>
    <ligand>
        <name>CTP</name>
        <dbReference type="ChEBI" id="CHEBI:37563"/>
        <note>allosteric inhibitor</note>
    </ligand>
</feature>
<feature type="binding site" evidence="1">
    <location>
        <begin position="187"/>
        <end position="192"/>
    </location>
    <ligand>
        <name>CTP</name>
        <dbReference type="ChEBI" id="CHEBI:37563"/>
        <note>allosteric inhibitor</note>
    </ligand>
</feature>
<feature type="binding site" evidence="1">
    <location>
        <begin position="187"/>
        <end position="192"/>
    </location>
    <ligand>
        <name>UTP</name>
        <dbReference type="ChEBI" id="CHEBI:46398"/>
    </ligand>
</feature>
<feature type="binding site" evidence="1">
    <location>
        <position position="223"/>
    </location>
    <ligand>
        <name>CTP</name>
        <dbReference type="ChEBI" id="CHEBI:37563"/>
        <note>allosteric inhibitor</note>
    </ligand>
</feature>
<feature type="binding site" evidence="1">
    <location>
        <position position="223"/>
    </location>
    <ligand>
        <name>UTP</name>
        <dbReference type="ChEBI" id="CHEBI:46398"/>
    </ligand>
</feature>
<feature type="binding site" evidence="1">
    <location>
        <begin position="239"/>
        <end position="241"/>
    </location>
    <ligand>
        <name>ATP</name>
        <dbReference type="ChEBI" id="CHEBI:30616"/>
    </ligand>
</feature>
<feature type="binding site" evidence="1">
    <location>
        <position position="352"/>
    </location>
    <ligand>
        <name>L-glutamine</name>
        <dbReference type="ChEBI" id="CHEBI:58359"/>
    </ligand>
</feature>
<feature type="binding site" evidence="1">
    <location>
        <begin position="380"/>
        <end position="383"/>
    </location>
    <ligand>
        <name>L-glutamine</name>
        <dbReference type="ChEBI" id="CHEBI:58359"/>
    </ligand>
</feature>
<feature type="binding site" evidence="1">
    <location>
        <position position="403"/>
    </location>
    <ligand>
        <name>L-glutamine</name>
        <dbReference type="ChEBI" id="CHEBI:58359"/>
    </ligand>
</feature>
<feature type="binding site" evidence="1">
    <location>
        <position position="470"/>
    </location>
    <ligand>
        <name>L-glutamine</name>
        <dbReference type="ChEBI" id="CHEBI:58359"/>
    </ligand>
</feature>
<comment type="function">
    <text evidence="1">Catalyzes the ATP-dependent amination of UTP to CTP with either L-glutamine or ammonia as the source of nitrogen. Regulates intracellular CTP levels through interactions with the four ribonucleotide triphosphates.</text>
</comment>
<comment type="catalytic activity">
    <reaction evidence="1">
        <text>UTP + L-glutamine + ATP + H2O = CTP + L-glutamate + ADP + phosphate + 2 H(+)</text>
        <dbReference type="Rhea" id="RHEA:26426"/>
        <dbReference type="ChEBI" id="CHEBI:15377"/>
        <dbReference type="ChEBI" id="CHEBI:15378"/>
        <dbReference type="ChEBI" id="CHEBI:29985"/>
        <dbReference type="ChEBI" id="CHEBI:30616"/>
        <dbReference type="ChEBI" id="CHEBI:37563"/>
        <dbReference type="ChEBI" id="CHEBI:43474"/>
        <dbReference type="ChEBI" id="CHEBI:46398"/>
        <dbReference type="ChEBI" id="CHEBI:58359"/>
        <dbReference type="ChEBI" id="CHEBI:456216"/>
        <dbReference type="EC" id="6.3.4.2"/>
    </reaction>
</comment>
<comment type="catalytic activity">
    <reaction evidence="1">
        <text>L-glutamine + H2O = L-glutamate + NH4(+)</text>
        <dbReference type="Rhea" id="RHEA:15889"/>
        <dbReference type="ChEBI" id="CHEBI:15377"/>
        <dbReference type="ChEBI" id="CHEBI:28938"/>
        <dbReference type="ChEBI" id="CHEBI:29985"/>
        <dbReference type="ChEBI" id="CHEBI:58359"/>
    </reaction>
</comment>
<comment type="catalytic activity">
    <reaction evidence="1">
        <text>UTP + NH4(+) + ATP = CTP + ADP + phosphate + 2 H(+)</text>
        <dbReference type="Rhea" id="RHEA:16597"/>
        <dbReference type="ChEBI" id="CHEBI:15378"/>
        <dbReference type="ChEBI" id="CHEBI:28938"/>
        <dbReference type="ChEBI" id="CHEBI:30616"/>
        <dbReference type="ChEBI" id="CHEBI:37563"/>
        <dbReference type="ChEBI" id="CHEBI:43474"/>
        <dbReference type="ChEBI" id="CHEBI:46398"/>
        <dbReference type="ChEBI" id="CHEBI:456216"/>
    </reaction>
</comment>
<comment type="activity regulation">
    <text evidence="1">Allosterically activated by GTP, when glutamine is the substrate; GTP has no effect on the reaction when ammonia is the substrate. The allosteric effector GTP functions by stabilizing the protein conformation that binds the tetrahedral intermediate(s) formed during glutamine hydrolysis. Inhibited by the product CTP, via allosteric rather than competitive inhibition.</text>
</comment>
<comment type="pathway">
    <text evidence="1">Pyrimidine metabolism; CTP biosynthesis via de novo pathway; CTP from UDP: step 2/2.</text>
</comment>
<comment type="subunit">
    <text evidence="1">Homotetramer.</text>
</comment>
<comment type="miscellaneous">
    <text evidence="1">CTPSs have evolved a hybrid strategy for distinguishing between UTP and CTP. The overlapping regions of the product feedback inhibitory and substrate sites recognize a common feature in both compounds, the triphosphate moiety. To differentiate isosteric substrate and product pyrimidine rings, an additional pocket far from the expected kinase/ligase catalytic site, specifically recognizes the cytosine and ribose portions of the product inhibitor.</text>
</comment>
<comment type="similarity">
    <text evidence="1">Belongs to the CTP synthase family.</text>
</comment>
<keyword id="KW-0067">ATP-binding</keyword>
<keyword id="KW-0315">Glutamine amidotransferase</keyword>
<keyword id="KW-0436">Ligase</keyword>
<keyword id="KW-0460">Magnesium</keyword>
<keyword id="KW-0479">Metal-binding</keyword>
<keyword id="KW-0547">Nucleotide-binding</keyword>
<keyword id="KW-0665">Pyrimidine biosynthesis</keyword>
<accession>Q5PEJ0</accession>
<gene>
    <name evidence="1" type="primary">pyrG</name>
    <name type="ordered locus">SPA2810</name>
</gene>
<evidence type="ECO:0000255" key="1">
    <source>
        <dbReference type="HAMAP-Rule" id="MF_01227"/>
    </source>
</evidence>
<proteinExistence type="inferred from homology"/>